<proteinExistence type="inferred from homology"/>
<comment type="function">
    <text evidence="1">Involved in the catabolism of quinolinic acid (QA).</text>
</comment>
<comment type="catalytic activity">
    <reaction>
        <text>nicotinate beta-D-ribonucleotide + CO2 + diphosphate = quinolinate + 5-phospho-alpha-D-ribose 1-diphosphate + 2 H(+)</text>
        <dbReference type="Rhea" id="RHEA:12733"/>
        <dbReference type="ChEBI" id="CHEBI:15378"/>
        <dbReference type="ChEBI" id="CHEBI:16526"/>
        <dbReference type="ChEBI" id="CHEBI:29959"/>
        <dbReference type="ChEBI" id="CHEBI:33019"/>
        <dbReference type="ChEBI" id="CHEBI:57502"/>
        <dbReference type="ChEBI" id="CHEBI:58017"/>
        <dbReference type="EC" id="2.4.2.19"/>
    </reaction>
</comment>
<comment type="pathway">
    <text>Cofactor biosynthesis; NAD(+) biosynthesis; nicotinate D-ribonucleotide from quinolinate: step 1/1.</text>
</comment>
<comment type="subunit">
    <text evidence="1">Hexamer formed by 3 homodimers.</text>
</comment>
<comment type="similarity">
    <text evidence="2">Belongs to the NadC/ModD family.</text>
</comment>
<sequence>MLKDYALKILKKSLEYDVGFGDITTNSIIPEGVKAKGVIKAKEKCIVCGIDFIVAFFEEYGIKCKKLFNDGEEAYGNILEFEGDARTILMLERTALNLLMHLSGIATMTNRIVKKAKSVNKNVRVACTRKTLPLLSPLQKYAVYIGGGDTHRFRLDDCVLIKDNHIAIVGVKEAIRRAKENVSFTKKIEVEVSNLKELREALEERADIIMLDNFKPEEIEEALKIIDEFERKTNFKPIIEVSGGIKEDNILEYAKYNVDVISMGALTHSVKSVDMSLDIVRYQ</sequence>
<keyword id="KW-0328">Glycosyltransferase</keyword>
<keyword id="KW-0662">Pyridine nucleotide biosynthesis</keyword>
<keyword id="KW-1185">Reference proteome</keyword>
<keyword id="KW-0808">Transferase</keyword>
<accession>Q57916</accession>
<reference key="1">
    <citation type="journal article" date="1996" name="Science">
        <title>Complete genome sequence of the methanogenic archaeon, Methanococcus jannaschii.</title>
        <authorList>
            <person name="Bult C.J."/>
            <person name="White O."/>
            <person name="Olsen G.J."/>
            <person name="Zhou L."/>
            <person name="Fleischmann R.D."/>
            <person name="Sutton G.G."/>
            <person name="Blake J.A."/>
            <person name="FitzGerald L.M."/>
            <person name="Clayton R.A."/>
            <person name="Gocayne J.D."/>
            <person name="Kerlavage A.R."/>
            <person name="Dougherty B.A."/>
            <person name="Tomb J.-F."/>
            <person name="Adams M.D."/>
            <person name="Reich C.I."/>
            <person name="Overbeek R."/>
            <person name="Kirkness E.F."/>
            <person name="Weinstock K.G."/>
            <person name="Merrick J.M."/>
            <person name="Glodek A."/>
            <person name="Scott J.L."/>
            <person name="Geoghagen N.S.M."/>
            <person name="Weidman J.F."/>
            <person name="Fuhrmann J.L."/>
            <person name="Nguyen D."/>
            <person name="Utterback T.R."/>
            <person name="Kelley J.M."/>
            <person name="Peterson J.D."/>
            <person name="Sadow P.W."/>
            <person name="Hanna M.C."/>
            <person name="Cotton M.D."/>
            <person name="Roberts K.M."/>
            <person name="Hurst M.A."/>
            <person name="Kaine B.P."/>
            <person name="Borodovsky M."/>
            <person name="Klenk H.-P."/>
            <person name="Fraser C.M."/>
            <person name="Smith H.O."/>
            <person name="Woese C.R."/>
            <person name="Venter J.C."/>
        </authorList>
    </citation>
    <scope>NUCLEOTIDE SEQUENCE [LARGE SCALE GENOMIC DNA]</scope>
    <source>
        <strain>ATCC 43067 / DSM 2661 / JAL-1 / JCM 10045 / NBRC 100440</strain>
    </source>
</reference>
<evidence type="ECO:0000250" key="1"/>
<evidence type="ECO:0000305" key="2"/>
<dbReference type="EC" id="2.4.2.19"/>
<dbReference type="EMBL" id="L77117">
    <property type="protein sequence ID" value="AAB98483.1"/>
    <property type="molecule type" value="Genomic_DNA"/>
</dbReference>
<dbReference type="PIR" id="E64361">
    <property type="entry name" value="E64361"/>
</dbReference>
<dbReference type="RefSeq" id="WP_010869994.1">
    <property type="nucleotide sequence ID" value="NC_000909.1"/>
</dbReference>
<dbReference type="SMR" id="Q57916"/>
<dbReference type="FunCoup" id="Q57916">
    <property type="interactions" value="161"/>
</dbReference>
<dbReference type="STRING" id="243232.MJ_0493"/>
<dbReference type="PaxDb" id="243232-MJ_0493"/>
<dbReference type="EnsemblBacteria" id="AAB98483">
    <property type="protein sequence ID" value="AAB98483"/>
    <property type="gene ID" value="MJ_0493"/>
</dbReference>
<dbReference type="GeneID" id="1451355"/>
<dbReference type="KEGG" id="mja:MJ_0493"/>
<dbReference type="eggNOG" id="arCOG01482">
    <property type="taxonomic scope" value="Archaea"/>
</dbReference>
<dbReference type="HOGENOM" id="CLU_039622_2_0_2"/>
<dbReference type="InParanoid" id="Q57916"/>
<dbReference type="OrthoDB" id="115072at2157"/>
<dbReference type="PhylomeDB" id="Q57916"/>
<dbReference type="UniPathway" id="UPA00253">
    <property type="reaction ID" value="UER00331"/>
</dbReference>
<dbReference type="Proteomes" id="UP000000805">
    <property type="component" value="Chromosome"/>
</dbReference>
<dbReference type="GO" id="GO:0005737">
    <property type="term" value="C:cytoplasm"/>
    <property type="evidence" value="ECO:0000318"/>
    <property type="project" value="GO_Central"/>
</dbReference>
<dbReference type="GO" id="GO:0004514">
    <property type="term" value="F:nicotinate-nucleotide diphosphorylase (carboxylating) activity"/>
    <property type="evidence" value="ECO:0000318"/>
    <property type="project" value="GO_Central"/>
</dbReference>
<dbReference type="GO" id="GO:0009435">
    <property type="term" value="P:NAD biosynthetic process"/>
    <property type="evidence" value="ECO:0000318"/>
    <property type="project" value="GO_Central"/>
</dbReference>
<dbReference type="GO" id="GO:0034213">
    <property type="term" value="P:quinolinate catabolic process"/>
    <property type="evidence" value="ECO:0000318"/>
    <property type="project" value="GO_Central"/>
</dbReference>
<dbReference type="CDD" id="cd01572">
    <property type="entry name" value="QPRTase"/>
    <property type="match status" value="1"/>
</dbReference>
<dbReference type="FunFam" id="3.90.1170.20:FF:000001">
    <property type="entry name" value="Nicotinate-nucleotide diphosphorylase (Carboxylating)"/>
    <property type="match status" value="1"/>
</dbReference>
<dbReference type="FunFam" id="3.20.20.70:FF:000030">
    <property type="entry name" value="Nicotinate-nucleotide pyrophosphorylase, carboxylating"/>
    <property type="match status" value="1"/>
</dbReference>
<dbReference type="Gene3D" id="3.20.20.70">
    <property type="entry name" value="Aldolase class I"/>
    <property type="match status" value="1"/>
</dbReference>
<dbReference type="Gene3D" id="3.90.1170.20">
    <property type="entry name" value="Quinolinate phosphoribosyl transferase, N-terminal domain"/>
    <property type="match status" value="1"/>
</dbReference>
<dbReference type="InterPro" id="IPR013785">
    <property type="entry name" value="Aldolase_TIM"/>
</dbReference>
<dbReference type="InterPro" id="IPR004393">
    <property type="entry name" value="NadC"/>
</dbReference>
<dbReference type="InterPro" id="IPR027277">
    <property type="entry name" value="NadC/ModD"/>
</dbReference>
<dbReference type="InterPro" id="IPR036068">
    <property type="entry name" value="Nicotinate_pribotase-like_C"/>
</dbReference>
<dbReference type="InterPro" id="IPR037128">
    <property type="entry name" value="Quinolinate_PRibosylTase_N_sf"/>
</dbReference>
<dbReference type="InterPro" id="IPR002638">
    <property type="entry name" value="Quinolinate_PRibosylTrfase_C"/>
</dbReference>
<dbReference type="InterPro" id="IPR022412">
    <property type="entry name" value="Quinolinate_PRibosylTrfase_N"/>
</dbReference>
<dbReference type="NCBIfam" id="TIGR00078">
    <property type="entry name" value="nadC"/>
    <property type="match status" value="1"/>
</dbReference>
<dbReference type="PANTHER" id="PTHR32179">
    <property type="entry name" value="NICOTINATE-NUCLEOTIDE PYROPHOSPHORYLASE [CARBOXYLATING]"/>
    <property type="match status" value="1"/>
</dbReference>
<dbReference type="PANTHER" id="PTHR32179:SF3">
    <property type="entry name" value="NICOTINATE-NUCLEOTIDE PYROPHOSPHORYLASE [CARBOXYLATING]"/>
    <property type="match status" value="1"/>
</dbReference>
<dbReference type="Pfam" id="PF01729">
    <property type="entry name" value="QRPTase_C"/>
    <property type="match status" value="1"/>
</dbReference>
<dbReference type="Pfam" id="PF02749">
    <property type="entry name" value="QRPTase_N"/>
    <property type="match status" value="1"/>
</dbReference>
<dbReference type="PIRSF" id="PIRSF006250">
    <property type="entry name" value="NadC_ModD"/>
    <property type="match status" value="1"/>
</dbReference>
<dbReference type="SUPFAM" id="SSF51690">
    <property type="entry name" value="Nicotinate/Quinolinate PRTase C-terminal domain-like"/>
    <property type="match status" value="1"/>
</dbReference>
<dbReference type="SUPFAM" id="SSF54675">
    <property type="entry name" value="Nicotinate/Quinolinate PRTase N-terminal domain-like"/>
    <property type="match status" value="1"/>
</dbReference>
<protein>
    <recommendedName>
        <fullName>Probable nicotinate-nucleotide pyrophosphorylase [carboxylating]</fullName>
        <ecNumber>2.4.2.19</ecNumber>
    </recommendedName>
    <alternativeName>
        <fullName>Quinolinate phosphoribosyltransferase [decarboxylating]</fullName>
        <shortName>QAPRTase</shortName>
    </alternativeName>
</protein>
<gene>
    <name type="primary">nadC</name>
    <name type="ordered locus">MJ0493</name>
</gene>
<name>NADC_METJA</name>
<organism>
    <name type="scientific">Methanocaldococcus jannaschii (strain ATCC 43067 / DSM 2661 / JAL-1 / JCM 10045 / NBRC 100440)</name>
    <name type="common">Methanococcus jannaschii</name>
    <dbReference type="NCBI Taxonomy" id="243232"/>
    <lineage>
        <taxon>Archaea</taxon>
        <taxon>Methanobacteriati</taxon>
        <taxon>Methanobacteriota</taxon>
        <taxon>Methanomada group</taxon>
        <taxon>Methanococci</taxon>
        <taxon>Methanococcales</taxon>
        <taxon>Methanocaldococcaceae</taxon>
        <taxon>Methanocaldococcus</taxon>
    </lineage>
</organism>
<feature type="chain" id="PRO_0000155952" description="Probable nicotinate-nucleotide pyrophosphorylase [carboxylating]">
    <location>
        <begin position="1"/>
        <end position="283"/>
    </location>
</feature>
<feature type="binding site" evidence="1">
    <location>
        <position position="93"/>
    </location>
    <ligand>
        <name>substrate</name>
    </ligand>
</feature>
<feature type="binding site" evidence="1">
    <location>
        <begin position="128"/>
        <end position="130"/>
    </location>
    <ligand>
        <name>substrate</name>
    </ligand>
</feature>
<feature type="binding site" evidence="1">
    <location>
        <position position="152"/>
    </location>
    <ligand>
        <name>substrate</name>
    </ligand>
</feature>
<feature type="binding site" evidence="1">
    <location>
        <position position="162"/>
    </location>
    <ligand>
        <name>substrate</name>
    </ligand>
</feature>
<feature type="binding site" evidence="1">
    <location>
        <position position="191"/>
    </location>
    <ligand>
        <name>substrate</name>
    </ligand>
</feature>
<feature type="binding site" evidence="1">
    <location>
        <position position="212"/>
    </location>
    <ligand>
        <name>substrate</name>
    </ligand>
</feature>
<feature type="binding site" evidence="1">
    <location>
        <begin position="242"/>
        <end position="244"/>
    </location>
    <ligand>
        <name>substrate</name>
    </ligand>
</feature>
<feature type="binding site" evidence="1">
    <location>
        <begin position="263"/>
        <end position="265"/>
    </location>
    <ligand>
        <name>substrate</name>
    </ligand>
</feature>